<reference key="1">
    <citation type="journal article" date="2003" name="Proc. Natl. Acad. Sci. U.S.A.">
        <title>The complete genome sequence of Chromobacterium violaceum reveals remarkable and exploitable bacterial adaptability.</title>
        <authorList>
            <person name="Vasconcelos A.T.R."/>
            <person name="de Almeida D.F."/>
            <person name="Hungria M."/>
            <person name="Guimaraes C.T."/>
            <person name="Antonio R.V."/>
            <person name="Almeida F.C."/>
            <person name="de Almeida L.G.P."/>
            <person name="de Almeida R."/>
            <person name="Alves-Gomes J.A."/>
            <person name="Andrade E.M."/>
            <person name="Araripe J."/>
            <person name="de Araujo M.F.F."/>
            <person name="Astolfi-Filho S."/>
            <person name="Azevedo V."/>
            <person name="Baptista A.J."/>
            <person name="Bataus L.A.M."/>
            <person name="Batista J.S."/>
            <person name="Belo A."/>
            <person name="van den Berg C."/>
            <person name="Bogo M."/>
            <person name="Bonatto S."/>
            <person name="Bordignon J."/>
            <person name="Brigido M.M."/>
            <person name="Brito C.A."/>
            <person name="Brocchi M."/>
            <person name="Burity H.A."/>
            <person name="Camargo A.A."/>
            <person name="Cardoso D.D.P."/>
            <person name="Carneiro N.P."/>
            <person name="Carraro D.M."/>
            <person name="Carvalho C.M.B."/>
            <person name="Cascardo J.C.M."/>
            <person name="Cavada B.S."/>
            <person name="Chueire L.M.O."/>
            <person name="Creczynski-Pasa T.B."/>
            <person name="Cunha-Junior N.C."/>
            <person name="Fagundes N."/>
            <person name="Falcao C.L."/>
            <person name="Fantinatti F."/>
            <person name="Farias I.P."/>
            <person name="Felipe M.S.S."/>
            <person name="Ferrari L.P."/>
            <person name="Ferro J.A."/>
            <person name="Ferro M.I.T."/>
            <person name="Franco G.R."/>
            <person name="Freitas N.S.A."/>
            <person name="Furlan L.R."/>
            <person name="Gazzinelli R.T."/>
            <person name="Gomes E.A."/>
            <person name="Goncalves P.R."/>
            <person name="Grangeiro T.B."/>
            <person name="Grattapaglia D."/>
            <person name="Grisard E.C."/>
            <person name="Hanna E.S."/>
            <person name="Jardim S.N."/>
            <person name="Laurino J."/>
            <person name="Leoi L.C.T."/>
            <person name="Lima L.F.A."/>
            <person name="Loureiro M.F."/>
            <person name="Lyra M.C.C.P."/>
            <person name="Madeira H.M.F."/>
            <person name="Manfio G.P."/>
            <person name="Maranhao A.Q."/>
            <person name="Martins W.S."/>
            <person name="di Mauro S.M.Z."/>
            <person name="de Medeiros S.R.B."/>
            <person name="Meissner R.V."/>
            <person name="Moreira M.A.M."/>
            <person name="Nascimento F.F."/>
            <person name="Nicolas M.F."/>
            <person name="Oliveira J.G."/>
            <person name="Oliveira S.C."/>
            <person name="Paixao R.F.C."/>
            <person name="Parente J.A."/>
            <person name="Pedrosa F.O."/>
            <person name="Pena S.D.J."/>
            <person name="Pereira J.O."/>
            <person name="Pereira M."/>
            <person name="Pinto L.S.R.C."/>
            <person name="Pinto L.S."/>
            <person name="Porto J.I.R."/>
            <person name="Potrich D.P."/>
            <person name="Ramalho-Neto C.E."/>
            <person name="Reis A.M.M."/>
            <person name="Rigo L.U."/>
            <person name="Rondinelli E."/>
            <person name="Santos E.B.P."/>
            <person name="Santos F.R."/>
            <person name="Schneider M.P.C."/>
            <person name="Seuanez H.N."/>
            <person name="Silva A.M.R."/>
            <person name="da Silva A.L.C."/>
            <person name="Silva D.W."/>
            <person name="Silva R."/>
            <person name="Simoes I.C."/>
            <person name="Simon D."/>
            <person name="Soares C.M.A."/>
            <person name="Soares R.B.A."/>
            <person name="Souza E.M."/>
            <person name="Souza K.R.L."/>
            <person name="Souza R.C."/>
            <person name="Steffens M.B.R."/>
            <person name="Steindel M."/>
            <person name="Teixeira S.R."/>
            <person name="Urmenyi T."/>
            <person name="Vettore A."/>
            <person name="Wassem R."/>
            <person name="Zaha A."/>
            <person name="Simpson A.J.G."/>
        </authorList>
    </citation>
    <scope>NUCLEOTIDE SEQUENCE [LARGE SCALE GENOMIC DNA]</scope>
    <source>
        <strain>ATCC 12472 / DSM 30191 / JCM 1249 / CCUG 213 / NBRC 12614 / NCIMB 9131 / NCTC 9757 / MK</strain>
    </source>
</reference>
<keyword id="KW-0012">Acyltransferase</keyword>
<keyword id="KW-0028">Amino-acid biosynthesis</keyword>
<keyword id="KW-0963">Cytoplasm</keyword>
<keyword id="KW-0220">Diaminopimelate biosynthesis</keyword>
<keyword id="KW-0457">Lysine biosynthesis</keyword>
<keyword id="KW-1185">Reference proteome</keyword>
<keyword id="KW-0677">Repeat</keyword>
<keyword id="KW-0808">Transferase</keyword>
<organism>
    <name type="scientific">Chromobacterium violaceum (strain ATCC 12472 / DSM 30191 / JCM 1249 / CCUG 213 / NBRC 12614 / NCIMB 9131 / NCTC 9757 / MK)</name>
    <dbReference type="NCBI Taxonomy" id="243365"/>
    <lineage>
        <taxon>Bacteria</taxon>
        <taxon>Pseudomonadati</taxon>
        <taxon>Pseudomonadota</taxon>
        <taxon>Betaproteobacteria</taxon>
        <taxon>Neisseriales</taxon>
        <taxon>Chromobacteriaceae</taxon>
        <taxon>Chromobacterium</taxon>
    </lineage>
</organism>
<protein>
    <recommendedName>
        <fullName evidence="1">2,3,4,5-tetrahydropyridine-2,6-dicarboxylate N-succinyltransferase</fullName>
        <ecNumber evidence="1">2.3.1.117</ecNumber>
    </recommendedName>
    <alternativeName>
        <fullName evidence="1">Tetrahydrodipicolinate N-succinyltransferase</fullName>
        <shortName evidence="1">THDP succinyltransferase</shortName>
        <shortName evidence="1">THP succinyltransferase</shortName>
        <shortName evidence="1">Tetrahydropicolinate succinylase</shortName>
    </alternativeName>
</protein>
<dbReference type="EC" id="2.3.1.117" evidence="1"/>
<dbReference type="EMBL" id="AE016825">
    <property type="protein sequence ID" value="AAQ58128.1"/>
    <property type="molecule type" value="Genomic_DNA"/>
</dbReference>
<dbReference type="RefSeq" id="WP_011134005.1">
    <property type="nucleotide sequence ID" value="NC_005085.1"/>
</dbReference>
<dbReference type="SMR" id="Q7P0W5"/>
<dbReference type="STRING" id="243365.CV_0450"/>
<dbReference type="KEGG" id="cvi:CV_0450"/>
<dbReference type="eggNOG" id="COG2171">
    <property type="taxonomic scope" value="Bacteria"/>
</dbReference>
<dbReference type="HOGENOM" id="CLU_050859_0_1_4"/>
<dbReference type="OrthoDB" id="9775362at2"/>
<dbReference type="UniPathway" id="UPA00034">
    <property type="reaction ID" value="UER00019"/>
</dbReference>
<dbReference type="Proteomes" id="UP000001424">
    <property type="component" value="Chromosome"/>
</dbReference>
<dbReference type="GO" id="GO:0005737">
    <property type="term" value="C:cytoplasm"/>
    <property type="evidence" value="ECO:0007669"/>
    <property type="project" value="UniProtKB-SubCell"/>
</dbReference>
<dbReference type="GO" id="GO:0008666">
    <property type="term" value="F:2,3,4,5-tetrahydropyridine-2,6-dicarboxylate N-succinyltransferase activity"/>
    <property type="evidence" value="ECO:0007669"/>
    <property type="project" value="UniProtKB-UniRule"/>
</dbReference>
<dbReference type="GO" id="GO:0016779">
    <property type="term" value="F:nucleotidyltransferase activity"/>
    <property type="evidence" value="ECO:0007669"/>
    <property type="project" value="TreeGrafter"/>
</dbReference>
<dbReference type="GO" id="GO:0019877">
    <property type="term" value="P:diaminopimelate biosynthetic process"/>
    <property type="evidence" value="ECO:0007669"/>
    <property type="project" value="UniProtKB-UniRule"/>
</dbReference>
<dbReference type="GO" id="GO:0009089">
    <property type="term" value="P:lysine biosynthetic process via diaminopimelate"/>
    <property type="evidence" value="ECO:0007669"/>
    <property type="project" value="UniProtKB-UniRule"/>
</dbReference>
<dbReference type="CDD" id="cd03350">
    <property type="entry name" value="LbH_THP_succinylT"/>
    <property type="match status" value="1"/>
</dbReference>
<dbReference type="Gene3D" id="2.160.10.10">
    <property type="entry name" value="Hexapeptide repeat proteins"/>
    <property type="match status" value="1"/>
</dbReference>
<dbReference type="Gene3D" id="1.10.166.10">
    <property type="entry name" value="Tetrahydrodipicolinate-N-succinyltransferase, N-terminal domain"/>
    <property type="match status" value="1"/>
</dbReference>
<dbReference type="HAMAP" id="MF_00811">
    <property type="entry name" value="DapD"/>
    <property type="match status" value="1"/>
</dbReference>
<dbReference type="InterPro" id="IPR005664">
    <property type="entry name" value="DapD_Trfase_Hexpep_rpt_fam"/>
</dbReference>
<dbReference type="InterPro" id="IPR001451">
    <property type="entry name" value="Hexapep"/>
</dbReference>
<dbReference type="InterPro" id="IPR018357">
    <property type="entry name" value="Hexapep_transf_CS"/>
</dbReference>
<dbReference type="InterPro" id="IPR023180">
    <property type="entry name" value="THP_succinylTrfase_dom1"/>
</dbReference>
<dbReference type="InterPro" id="IPR037133">
    <property type="entry name" value="THP_succinylTrfase_N_sf"/>
</dbReference>
<dbReference type="InterPro" id="IPR011004">
    <property type="entry name" value="Trimer_LpxA-like_sf"/>
</dbReference>
<dbReference type="NCBIfam" id="TIGR00965">
    <property type="entry name" value="dapD"/>
    <property type="match status" value="1"/>
</dbReference>
<dbReference type="NCBIfam" id="NF008808">
    <property type="entry name" value="PRK11830.1"/>
    <property type="match status" value="1"/>
</dbReference>
<dbReference type="PANTHER" id="PTHR19136:SF52">
    <property type="entry name" value="2,3,4,5-TETRAHYDROPYRIDINE-2,6-DICARBOXYLATE N-SUCCINYLTRANSFERASE"/>
    <property type="match status" value="1"/>
</dbReference>
<dbReference type="PANTHER" id="PTHR19136">
    <property type="entry name" value="MOLYBDENUM COFACTOR GUANYLYLTRANSFERASE"/>
    <property type="match status" value="1"/>
</dbReference>
<dbReference type="Pfam" id="PF14602">
    <property type="entry name" value="Hexapep_2"/>
    <property type="match status" value="1"/>
</dbReference>
<dbReference type="Pfam" id="PF14805">
    <property type="entry name" value="THDPS_N_2"/>
    <property type="match status" value="1"/>
</dbReference>
<dbReference type="SUPFAM" id="SSF51161">
    <property type="entry name" value="Trimeric LpxA-like enzymes"/>
    <property type="match status" value="1"/>
</dbReference>
<dbReference type="PROSITE" id="PS00101">
    <property type="entry name" value="HEXAPEP_TRANSFERASES"/>
    <property type="match status" value="1"/>
</dbReference>
<name>DAPD_CHRVO</name>
<gene>
    <name evidence="1" type="primary">dapD</name>
    <name type="ordered locus">CV_0450</name>
</gene>
<sequence length="273" mass="29496">MHPIQSLIEQAFENRAEITPATVSPELKAAIEQVITELDNGHLRVAEKNGAEWVVNQWVKKAVLLSFRIRDNAVQDDGVNRYFDKVDTKFADWSQARFQEAGFRVVPGAVARKGSFIAKNTVLMPSYVNIGAYVDEGTMVDTWATVGSCAQIGKNVHLSGGVGIGGVLEPLQANPTIIEDNCFIGARSEIVEGVIVGEGSVISMGVYIGQSTKIYDRETGEVMYGRVPPGSVVVSGNLPSKDGSHSLYCAVIVKKVDAQTRSKTSINELLRGV</sequence>
<proteinExistence type="inferred from homology"/>
<comment type="catalytic activity">
    <reaction evidence="1">
        <text>(S)-2,3,4,5-tetrahydrodipicolinate + succinyl-CoA + H2O = (S)-2-succinylamino-6-oxoheptanedioate + CoA</text>
        <dbReference type="Rhea" id="RHEA:17325"/>
        <dbReference type="ChEBI" id="CHEBI:15377"/>
        <dbReference type="ChEBI" id="CHEBI:15685"/>
        <dbReference type="ChEBI" id="CHEBI:16845"/>
        <dbReference type="ChEBI" id="CHEBI:57287"/>
        <dbReference type="ChEBI" id="CHEBI:57292"/>
        <dbReference type="EC" id="2.3.1.117"/>
    </reaction>
</comment>
<comment type="pathway">
    <text evidence="1">Amino-acid biosynthesis; L-lysine biosynthesis via DAP pathway; LL-2,6-diaminopimelate from (S)-tetrahydrodipicolinate (succinylase route): step 1/3.</text>
</comment>
<comment type="subunit">
    <text evidence="1">Homotrimer.</text>
</comment>
<comment type="subcellular location">
    <subcellularLocation>
        <location evidence="1">Cytoplasm</location>
    </subcellularLocation>
</comment>
<comment type="similarity">
    <text evidence="1">Belongs to the transferase hexapeptide repeat family.</text>
</comment>
<feature type="chain" id="PRO_0000196930" description="2,3,4,5-tetrahydropyridine-2,6-dicarboxylate N-succinyltransferase">
    <location>
        <begin position="1"/>
        <end position="273"/>
    </location>
</feature>
<feature type="binding site" evidence="1">
    <location>
        <position position="104"/>
    </location>
    <ligand>
        <name>substrate</name>
    </ligand>
</feature>
<feature type="binding site" evidence="1">
    <location>
        <position position="141"/>
    </location>
    <ligand>
        <name>substrate</name>
    </ligand>
</feature>
<evidence type="ECO:0000255" key="1">
    <source>
        <dbReference type="HAMAP-Rule" id="MF_00811"/>
    </source>
</evidence>
<accession>Q7P0W5</accession>